<protein>
    <recommendedName>
        <fullName evidence="4">Probable N-acetyl-alpha-D-glucosaminyl L-malate deacetylase 2</fullName>
        <shortName evidence="4">GlcNAc-Mal deacetylase 2</shortName>
        <ecNumber evidence="2">3.5.1.-</ecNumber>
    </recommendedName>
</protein>
<name>BSHB2_BACAN</name>
<comment type="function">
    <text evidence="2">Involved in bacillithiol (BSH) biosynthesis. Catalyzes the second step of the pathway, the deacetylation of N-acetylglucosaminylmalate (GlcNAc-Mal) to glucosamine malate (GlcN-Mal). Could also be involved in bacillithiol-detoxifying pathways through formation of S-mercapturic adducts.</text>
</comment>
<comment type="catalytic activity">
    <reaction evidence="2">
        <text>(S)-malyl N-acetyl-alpha-D-glucosaminide + H2O = (S)-malyl alpha-D-glucosaminide + acetate</text>
        <dbReference type="Rhea" id="RHEA:33411"/>
        <dbReference type="ChEBI" id="CHEBI:15377"/>
        <dbReference type="ChEBI" id="CHEBI:30089"/>
        <dbReference type="ChEBI" id="CHEBI:64870"/>
        <dbReference type="ChEBI" id="CHEBI:64871"/>
    </reaction>
</comment>
<comment type="cofactor">
    <cofactor evidence="1">
        <name>Zn(2+)</name>
        <dbReference type="ChEBI" id="CHEBI:29105"/>
    </cofactor>
</comment>
<comment type="biophysicochemical properties">
    <kinetics>
        <KM evidence="2">0.32 mM for GlcNAc-Mal</KM>
        <text evidence="2">kcat is 6.48 sec(-1) with GlcNAc-Mal as substrate. KM for bacillithiol-S-bimane (BSmB) is superior to 5 mM. kcat is 0.031 sec(-1) with BSmB as substrate.</text>
    </kinetics>
</comment>
<comment type="similarity">
    <text evidence="4">Belongs to the PIGL family.</text>
</comment>
<dbReference type="EC" id="3.5.1.-" evidence="2"/>
<dbReference type="EMBL" id="AE016879">
    <property type="protein sequence ID" value="AAP27621.1"/>
    <property type="molecule type" value="Genomic_DNA"/>
</dbReference>
<dbReference type="EMBL" id="AE017334">
    <property type="protein sequence ID" value="AAT33001.1"/>
    <property type="molecule type" value="Genomic_DNA"/>
</dbReference>
<dbReference type="EMBL" id="AE017225">
    <property type="protein sequence ID" value="AAT55906.1"/>
    <property type="molecule type" value="Genomic_DNA"/>
</dbReference>
<dbReference type="EMBL" id="CP009902">
    <property type="protein sequence ID" value="AJH89515.1"/>
    <property type="molecule type" value="Genomic_DNA"/>
</dbReference>
<dbReference type="EMBL" id="CP010813">
    <property type="protein sequence ID" value="AJG30403.1"/>
    <property type="molecule type" value="Genomic_DNA"/>
</dbReference>
<dbReference type="RefSeq" id="NP_846135.1">
    <property type="nucleotide sequence ID" value="NC_003997.3"/>
</dbReference>
<dbReference type="RefSeq" id="WP_000787327.1">
    <property type="nucleotide sequence ID" value="NZ_WXXJ01000001.1"/>
</dbReference>
<dbReference type="RefSeq" id="YP_029855.1">
    <property type="nucleotide sequence ID" value="NC_005945.1"/>
</dbReference>
<dbReference type="SMR" id="Q81WT0"/>
<dbReference type="STRING" id="261594.GBAA_3888"/>
<dbReference type="DNASU" id="1085379"/>
<dbReference type="GeneID" id="45023582"/>
<dbReference type="KEGG" id="ban:BA_3888"/>
<dbReference type="KEGG" id="bar:GBAA_3888"/>
<dbReference type="KEGG" id="bat:BAS3602"/>
<dbReference type="PATRIC" id="fig|198094.11.peg.3857"/>
<dbReference type="eggNOG" id="COG2120">
    <property type="taxonomic scope" value="Bacteria"/>
</dbReference>
<dbReference type="HOGENOM" id="CLU_049311_4_2_9"/>
<dbReference type="OMA" id="MHPERNW"/>
<dbReference type="OrthoDB" id="9790023at2"/>
<dbReference type="SABIO-RK" id="Q81WT0"/>
<dbReference type="Proteomes" id="UP000000427">
    <property type="component" value="Chromosome"/>
</dbReference>
<dbReference type="Proteomes" id="UP000000594">
    <property type="component" value="Chromosome"/>
</dbReference>
<dbReference type="GO" id="GO:0016811">
    <property type="term" value="F:hydrolase activity, acting on carbon-nitrogen (but not peptide) bonds, in linear amides"/>
    <property type="evidence" value="ECO:0007669"/>
    <property type="project" value="TreeGrafter"/>
</dbReference>
<dbReference type="GO" id="GO:0046872">
    <property type="term" value="F:metal ion binding"/>
    <property type="evidence" value="ECO:0007669"/>
    <property type="project" value="UniProtKB-KW"/>
</dbReference>
<dbReference type="Gene3D" id="3.40.50.10320">
    <property type="entry name" value="LmbE-like"/>
    <property type="match status" value="1"/>
</dbReference>
<dbReference type="InterPro" id="IPR023841">
    <property type="entry name" value="BshB2"/>
</dbReference>
<dbReference type="InterPro" id="IPR003737">
    <property type="entry name" value="GlcNAc_PI_deacetylase-related"/>
</dbReference>
<dbReference type="InterPro" id="IPR024078">
    <property type="entry name" value="LmbE-like_dom_sf"/>
</dbReference>
<dbReference type="NCBIfam" id="TIGR04000">
    <property type="entry name" value="thiol_BshB2"/>
    <property type="match status" value="1"/>
</dbReference>
<dbReference type="PANTHER" id="PTHR12993:SF27">
    <property type="entry name" value="N-ACETYL-ALPHA-D-GLUCOSAMINYL L-MALATE DEACETYLASE 2-RELATED"/>
    <property type="match status" value="1"/>
</dbReference>
<dbReference type="PANTHER" id="PTHR12993">
    <property type="entry name" value="N-ACETYLGLUCOSAMINYL-PHOSPHATIDYLINOSITOL DE-N-ACETYLASE-RELATED"/>
    <property type="match status" value="1"/>
</dbReference>
<dbReference type="Pfam" id="PF02585">
    <property type="entry name" value="PIG-L"/>
    <property type="match status" value="1"/>
</dbReference>
<dbReference type="SUPFAM" id="SSF102588">
    <property type="entry name" value="LmbE-like"/>
    <property type="match status" value="1"/>
</dbReference>
<sequence length="226" mass="25857">MKNERHVLIVFPHPDDESYCVAGTILAYTQRNVPLTYVCLTLGEMGRAMGNPPFATRESLYAIREKELKRATNILGIKDLRMMGYRDKTLEFETPGELRRVIQKCVEELNPSLVISFYPGYAVHPDHDATGEAVAEALATIPENKRPTFYAVAFANNHEAEIGPPHVKNEVKEYVPKKLEALQAHASQFATKVTELKREYEDGVTETVEWLEREPFWIYPFKDKNK</sequence>
<feature type="chain" id="PRO_0000433162" description="Probable N-acetyl-alpha-D-glucosaminyl L-malate deacetylase 2">
    <location>
        <begin position="1"/>
        <end position="226"/>
    </location>
</feature>
<feature type="binding site" evidence="1">
    <location>
        <position position="13"/>
    </location>
    <ligand>
        <name>Zn(2+)</name>
        <dbReference type="ChEBI" id="CHEBI:29105"/>
    </ligand>
</feature>
<feature type="binding site" evidence="1">
    <location>
        <position position="16"/>
    </location>
    <ligand>
        <name>Zn(2+)</name>
        <dbReference type="ChEBI" id="CHEBI:29105"/>
    </ligand>
</feature>
<feature type="binding site" evidence="1">
    <location>
        <position position="127"/>
    </location>
    <ligand>
        <name>Zn(2+)</name>
        <dbReference type="ChEBI" id="CHEBI:29105"/>
    </ligand>
</feature>
<accession>Q81WT0</accession>
<accession>E9RAP9</accession>
<accession>E9RAQ0</accession>
<accession>Q6HUY3</accession>
<accession>Q6KP59</accession>
<reference key="1">
    <citation type="journal article" date="2003" name="Nature">
        <title>The genome sequence of Bacillus anthracis Ames and comparison to closely related bacteria.</title>
        <authorList>
            <person name="Read T.D."/>
            <person name="Peterson S.N."/>
            <person name="Tourasse N.J."/>
            <person name="Baillie L.W."/>
            <person name="Paulsen I.T."/>
            <person name="Nelson K.E."/>
            <person name="Tettelin H."/>
            <person name="Fouts D.E."/>
            <person name="Eisen J.A."/>
            <person name="Gill S.R."/>
            <person name="Holtzapple E.K."/>
            <person name="Okstad O.A."/>
            <person name="Helgason E."/>
            <person name="Rilstone J."/>
            <person name="Wu M."/>
            <person name="Kolonay J.F."/>
            <person name="Beanan M.J."/>
            <person name="Dodson R.J."/>
            <person name="Brinkac L.M."/>
            <person name="Gwinn M.L."/>
            <person name="DeBoy R.T."/>
            <person name="Madpu R."/>
            <person name="Daugherty S.C."/>
            <person name="Durkin A.S."/>
            <person name="Haft D.H."/>
            <person name="Nelson W.C."/>
            <person name="Peterson J.D."/>
            <person name="Pop M."/>
            <person name="Khouri H.M."/>
            <person name="Radune D."/>
            <person name="Benton J.L."/>
            <person name="Mahamoud Y."/>
            <person name="Jiang L."/>
            <person name="Hance I.R."/>
            <person name="Weidman J.F."/>
            <person name="Berry K.J."/>
            <person name="Plaut R.D."/>
            <person name="Wolf A.M."/>
            <person name="Watkins K.L."/>
            <person name="Nierman W.C."/>
            <person name="Hazen A."/>
            <person name="Cline R.T."/>
            <person name="Redmond C."/>
            <person name="Thwaite J.E."/>
            <person name="White O."/>
            <person name="Salzberg S.L."/>
            <person name="Thomason B."/>
            <person name="Friedlander A.M."/>
            <person name="Koehler T.M."/>
            <person name="Hanna P.C."/>
            <person name="Kolstoe A.-B."/>
            <person name="Fraser C.M."/>
        </authorList>
    </citation>
    <scope>NUCLEOTIDE SEQUENCE [LARGE SCALE GENOMIC DNA]</scope>
    <source>
        <strain>Ames / isolate Porton</strain>
    </source>
</reference>
<reference key="2">
    <citation type="journal article" date="2009" name="J. Bacteriol.">
        <title>The complete genome sequence of Bacillus anthracis Ames 'Ancestor'.</title>
        <authorList>
            <person name="Ravel J."/>
            <person name="Jiang L."/>
            <person name="Stanley S.T."/>
            <person name="Wilson M.R."/>
            <person name="Decker R.S."/>
            <person name="Read T.D."/>
            <person name="Worsham P."/>
            <person name="Keim P.S."/>
            <person name="Salzberg S.L."/>
            <person name="Fraser-Liggett C.M."/>
            <person name="Rasko D.A."/>
        </authorList>
    </citation>
    <scope>NUCLEOTIDE SEQUENCE [LARGE SCALE GENOMIC DNA]</scope>
    <source>
        <strain>Ames ancestor</strain>
    </source>
</reference>
<reference key="3">
    <citation type="submission" date="2004-01" db="EMBL/GenBank/DDBJ databases">
        <title>Complete genome sequence of Bacillus anthracis Sterne.</title>
        <authorList>
            <person name="Brettin T.S."/>
            <person name="Bruce D."/>
            <person name="Challacombe J.F."/>
            <person name="Gilna P."/>
            <person name="Han C."/>
            <person name="Hill K."/>
            <person name="Hitchcock P."/>
            <person name="Jackson P."/>
            <person name="Keim P."/>
            <person name="Longmire J."/>
            <person name="Lucas S."/>
            <person name="Okinaka R."/>
            <person name="Richardson P."/>
            <person name="Rubin E."/>
            <person name="Tice H."/>
        </authorList>
    </citation>
    <scope>NUCLEOTIDE SEQUENCE [LARGE SCALE GENOMIC DNA]</scope>
    <source>
        <strain>Sterne</strain>
    </source>
</reference>
<reference key="4">
    <citation type="submission" date="2014-10" db="EMBL/GenBank/DDBJ databases">
        <authorList>
            <person name="Davenport K.W."/>
            <person name="Bishop-Lilly K.A."/>
            <person name="Broomall S.M."/>
            <person name="Chain P.S."/>
            <person name="Chertkov O."/>
            <person name="Coyne S.R."/>
            <person name="Daligault H.E."/>
            <person name="Erkkila T."/>
            <person name="Frey K.G."/>
            <person name="Gibbons H.S."/>
            <person name="Gu W."/>
            <person name="Jaissle J."/>
            <person name="Johnson S.L."/>
            <person name="Koroleva G.I."/>
            <person name="Ladner J.T."/>
            <person name="Lo C.-C."/>
            <person name="Minogue T.D."/>
            <person name="Munk C."/>
            <person name="Palacios G.F."/>
            <person name="Redden C.L."/>
            <person name="Rosenzweig C.N."/>
            <person name="Scholz M.B."/>
            <person name="Teshima H."/>
            <person name="Xu Y."/>
        </authorList>
    </citation>
    <scope>NUCLEOTIDE SEQUENCE [LARGE SCALE GENOMIC DNA]</scope>
    <source>
        <strain>2002013094</strain>
    </source>
</reference>
<reference key="5">
    <citation type="submission" date="2015-01" db="EMBL/GenBank/DDBJ databases">
        <title>Genome sequence of Bacillus anthracis Pollino isolated from a bovine anthrax-burial site in Italy.</title>
        <authorList>
            <person name="Fasanella A."/>
            <person name="Braun P."/>
            <person name="Grass G."/>
            <person name="Hanczaruk M."/>
            <person name="Aceti A."/>
            <person name="Serrecchia L."/>
            <person name="Marino L."/>
            <person name="Georgi E."/>
            <person name="Antwerpen M.H."/>
        </authorList>
    </citation>
    <scope>NUCLEOTIDE SEQUENCE [LARGE SCALE GENOMIC DNA]</scope>
    <source>
        <strain>Pollino</strain>
    </source>
</reference>
<reference key="6">
    <citation type="journal article" date="2013" name="Biochem. J.">
        <title>Cross-functionalities of Bacillus deacetylases involved in bacillithiol biosynthesis and bacillithiol-S-conjugate detoxification pathways.</title>
        <authorList>
            <person name="Fang Z."/>
            <person name="Roberts A.A."/>
            <person name="Weidman K."/>
            <person name="Sharma S.V."/>
            <person name="Claiborne A."/>
            <person name="Hamilton C.J."/>
            <person name="Dos Santos P.C."/>
        </authorList>
    </citation>
    <scope>FUNCTION</scope>
    <scope>CATALYTIC ACTIVITY</scope>
    <scope>BIOPHYSICOCHEMICAL PROPERTIES</scope>
</reference>
<proteinExistence type="evidence at protein level"/>
<gene>
    <name evidence="3" type="primary">bshB2</name>
    <name evidence="3" type="synonym">bca</name>
    <name evidence="5" type="ordered locus">BA_3888</name>
    <name evidence="7" type="ordered locus">BAS3602</name>
    <name evidence="6" type="ordered locus">GBAA_3888</name>
    <name evidence="9" type="ORF">BF27_3799</name>
    <name evidence="8" type="ORF">TM00_18885</name>
</gene>
<organism>
    <name type="scientific">Bacillus anthracis</name>
    <dbReference type="NCBI Taxonomy" id="1392"/>
    <lineage>
        <taxon>Bacteria</taxon>
        <taxon>Bacillati</taxon>
        <taxon>Bacillota</taxon>
        <taxon>Bacilli</taxon>
        <taxon>Bacillales</taxon>
        <taxon>Bacillaceae</taxon>
        <taxon>Bacillus</taxon>
        <taxon>Bacillus cereus group</taxon>
    </lineage>
</organism>
<keyword id="KW-0378">Hydrolase</keyword>
<keyword id="KW-0479">Metal-binding</keyword>
<keyword id="KW-1185">Reference proteome</keyword>
<keyword id="KW-0862">Zinc</keyword>
<evidence type="ECO:0000250" key="1">
    <source>
        <dbReference type="UniProtKB" id="Q81FP2"/>
    </source>
</evidence>
<evidence type="ECO:0000269" key="2">
    <source>
    </source>
</evidence>
<evidence type="ECO:0000303" key="3">
    <source>
    </source>
</evidence>
<evidence type="ECO:0000305" key="4"/>
<evidence type="ECO:0000312" key="5">
    <source>
        <dbReference type="EMBL" id="AAP27621.1"/>
    </source>
</evidence>
<evidence type="ECO:0000312" key="6">
    <source>
        <dbReference type="EMBL" id="AAT33001.1"/>
    </source>
</evidence>
<evidence type="ECO:0000312" key="7">
    <source>
        <dbReference type="EMBL" id="AAT55906.1"/>
    </source>
</evidence>
<evidence type="ECO:0000312" key="8">
    <source>
        <dbReference type="EMBL" id="AJG30403.1"/>
    </source>
</evidence>
<evidence type="ECO:0000312" key="9">
    <source>
        <dbReference type="EMBL" id="AJH89515.1"/>
    </source>
</evidence>